<dbReference type="EMBL" id="AL590448">
    <property type="protein sequence ID" value="CAD26508.1"/>
    <property type="molecule type" value="Genomic_DNA"/>
</dbReference>
<dbReference type="RefSeq" id="NP_597332.1">
    <property type="nucleotide sequence ID" value="NM_001041941.1"/>
</dbReference>
<dbReference type="SMR" id="Q8SUI0"/>
<dbReference type="GeneID" id="859754"/>
<dbReference type="KEGG" id="ecu:ECU08_2060"/>
<dbReference type="VEuPathDB" id="MicrosporidiaDB:ECU08_2060"/>
<dbReference type="HOGENOM" id="CLU_059413_0_0_1"/>
<dbReference type="InParanoid" id="Q8SUI0"/>
<dbReference type="Proteomes" id="UP000000819">
    <property type="component" value="Chromosome VIII"/>
</dbReference>
<dbReference type="InterPro" id="IPR019081">
    <property type="entry name" value="UPF0328"/>
</dbReference>
<dbReference type="Pfam" id="PF09591">
    <property type="entry name" value="DUF2463"/>
    <property type="match status" value="1"/>
</dbReference>
<protein>
    <recommendedName>
        <fullName>UPF0328 protein ECU08_2060</fullName>
    </recommendedName>
</protein>
<reference key="1">
    <citation type="journal article" date="2001" name="Nature">
        <title>Genome sequence and gene compaction of the eukaryote parasite Encephalitozoon cuniculi.</title>
        <authorList>
            <person name="Katinka M.D."/>
            <person name="Duprat S."/>
            <person name="Cornillot E."/>
            <person name="Metenier G."/>
            <person name="Thomarat F."/>
            <person name="Prensier G."/>
            <person name="Barbe V."/>
            <person name="Peyretaillade E."/>
            <person name="Brottier P."/>
            <person name="Wincker P."/>
            <person name="Delbac F."/>
            <person name="El Alaoui H."/>
            <person name="Peyret P."/>
            <person name="Saurin W."/>
            <person name="Gouy M."/>
            <person name="Weissenbach J."/>
            <person name="Vivares C.P."/>
        </authorList>
    </citation>
    <scope>NUCLEOTIDE SEQUENCE [LARGE SCALE GENOMIC DNA]</scope>
    <source>
        <strain>GB-M1</strain>
    </source>
</reference>
<evidence type="ECO:0000305" key="1"/>
<name>Y8K6_ENCCU</name>
<organism>
    <name type="scientific">Encephalitozoon cuniculi (strain GB-M1)</name>
    <name type="common">Microsporidian parasite</name>
    <dbReference type="NCBI Taxonomy" id="284813"/>
    <lineage>
        <taxon>Eukaryota</taxon>
        <taxon>Fungi</taxon>
        <taxon>Fungi incertae sedis</taxon>
        <taxon>Microsporidia</taxon>
        <taxon>Unikaryonidae</taxon>
        <taxon>Encephalitozoon</taxon>
    </lineage>
</organism>
<accession>Q8SUI0</accession>
<proteinExistence type="inferred from homology"/>
<sequence>MSVTNIPQSHETNEMQHIKNQSHWRVILSSLGIFMATVYPIFMYLVFTKDCFEERHLLRLITLLLPFLYSTIQYLFLLYTNWKNGHKQEDILYNILYYLLNLLLTTFSIISILSIIALIINRRENDDDLFFFSVILPSMPLTYLLSTSCRLVPGQIGFIDTGINIFIDILILSCLVSLTLICIEPKDYLCFIAISSALTLVRLLKKKYLSSKQSPPPTAPWRVAIFVLIFSFVVFIYVLAACGSITALDYHFHLFDKVKSILS</sequence>
<keyword id="KW-1185">Reference proteome</keyword>
<gene>
    <name type="ordered locus">ECU08_2060</name>
</gene>
<comment type="similarity">
    <text evidence="1">Belongs to the UPF0328 family.</text>
</comment>
<feature type="chain" id="PRO_0000223139" description="UPF0328 protein ECU08_2060">
    <location>
        <begin position="1"/>
        <end position="263"/>
    </location>
</feature>